<reference key="1">
    <citation type="journal article" date="2008" name="J. Bacteriol.">
        <title>Genome sequence of Staphylococcus aureus strain Newman and comparative analysis of staphylococcal genomes: polymorphism and evolution of two major pathogenicity islands.</title>
        <authorList>
            <person name="Baba T."/>
            <person name="Bae T."/>
            <person name="Schneewind O."/>
            <person name="Takeuchi F."/>
            <person name="Hiramatsu K."/>
        </authorList>
    </citation>
    <scope>NUCLEOTIDE SEQUENCE [LARGE SCALE GENOMIC DNA]</scope>
    <source>
        <strain>Newman</strain>
    </source>
</reference>
<gene>
    <name evidence="1" type="primary">rsbW</name>
    <name type="ordered locus">NWMN_1971</name>
</gene>
<organism>
    <name type="scientific">Staphylococcus aureus (strain Newman)</name>
    <dbReference type="NCBI Taxonomy" id="426430"/>
    <lineage>
        <taxon>Bacteria</taxon>
        <taxon>Bacillati</taxon>
        <taxon>Bacillota</taxon>
        <taxon>Bacilli</taxon>
        <taxon>Bacillales</taxon>
        <taxon>Staphylococcaceae</taxon>
        <taxon>Staphylococcus</taxon>
    </lineage>
</organism>
<feature type="chain" id="PRO_1000072680" description="Serine-protein kinase RsbW">
    <location>
        <begin position="1"/>
        <end position="159"/>
    </location>
</feature>
<proteinExistence type="inferred from homology"/>
<sequence length="159" mass="17921">MQSKEDFIEMRVPASAEYVSLIRLTLSGVFSRAGATYDDIEDAKIAVSEAVTNAVKHAYKENNNVGIINIYFEILEDKIKIVISDKGDSFDYETTKSKIGPYDKDENIDFLREGGLGLFLIESLMDEVTVYKESGVTISMTKYIKKEQVRNNGERVEIS</sequence>
<protein>
    <recommendedName>
        <fullName evidence="1">Serine-protein kinase RsbW</fullName>
        <ecNumber evidence="1">2.7.11.1</ecNumber>
    </recommendedName>
    <alternativeName>
        <fullName evidence="1">Anti-sigma-B factor</fullName>
    </alternativeName>
    <alternativeName>
        <fullName evidence="1">Sigma-B negative effector RsbW</fullName>
    </alternativeName>
</protein>
<name>RSBW_STAAE</name>
<dbReference type="EC" id="2.7.11.1" evidence="1"/>
<dbReference type="EMBL" id="AP009351">
    <property type="protein sequence ID" value="BAF68243.1"/>
    <property type="molecule type" value="Genomic_DNA"/>
</dbReference>
<dbReference type="RefSeq" id="WP_001190829.1">
    <property type="nucleotide sequence ID" value="NZ_JBBIAE010000008.1"/>
</dbReference>
<dbReference type="SMR" id="A6QIR1"/>
<dbReference type="KEGG" id="sae:NWMN_1971"/>
<dbReference type="HOGENOM" id="CLU_090336_11_1_9"/>
<dbReference type="Proteomes" id="UP000006386">
    <property type="component" value="Chromosome"/>
</dbReference>
<dbReference type="GO" id="GO:0005524">
    <property type="term" value="F:ATP binding"/>
    <property type="evidence" value="ECO:0007669"/>
    <property type="project" value="UniProtKB-KW"/>
</dbReference>
<dbReference type="GO" id="GO:0106310">
    <property type="term" value="F:protein serine kinase activity"/>
    <property type="evidence" value="ECO:0007669"/>
    <property type="project" value="RHEA"/>
</dbReference>
<dbReference type="GO" id="GO:0004674">
    <property type="term" value="F:protein serine/threonine kinase activity"/>
    <property type="evidence" value="ECO:0007669"/>
    <property type="project" value="UniProtKB-KW"/>
</dbReference>
<dbReference type="GO" id="GO:0016989">
    <property type="term" value="F:sigma factor antagonist activity"/>
    <property type="evidence" value="ECO:0007669"/>
    <property type="project" value="InterPro"/>
</dbReference>
<dbReference type="CDD" id="cd16936">
    <property type="entry name" value="HATPase_RsbW-like"/>
    <property type="match status" value="1"/>
</dbReference>
<dbReference type="Gene3D" id="3.30.565.10">
    <property type="entry name" value="Histidine kinase-like ATPase, C-terminal domain"/>
    <property type="match status" value="1"/>
</dbReference>
<dbReference type="HAMAP" id="MF_00638">
    <property type="entry name" value="Anti_sigma_B"/>
    <property type="match status" value="1"/>
</dbReference>
<dbReference type="InterPro" id="IPR050267">
    <property type="entry name" value="Anti-sigma-factor_SerPK"/>
</dbReference>
<dbReference type="InterPro" id="IPR036890">
    <property type="entry name" value="HATPase_C_sf"/>
</dbReference>
<dbReference type="InterPro" id="IPR010193">
    <property type="entry name" value="RsbW"/>
</dbReference>
<dbReference type="NCBIfam" id="NF003144">
    <property type="entry name" value="PRK04069.1"/>
    <property type="match status" value="1"/>
</dbReference>
<dbReference type="NCBIfam" id="TIGR01924">
    <property type="entry name" value="rsbW_low_gc"/>
    <property type="match status" value="1"/>
</dbReference>
<dbReference type="PANTHER" id="PTHR35526">
    <property type="entry name" value="ANTI-SIGMA-F FACTOR RSBW-RELATED"/>
    <property type="match status" value="1"/>
</dbReference>
<dbReference type="PANTHER" id="PTHR35526:SF9">
    <property type="entry name" value="SERINE-PROTEIN KINASE RSBW"/>
    <property type="match status" value="1"/>
</dbReference>
<dbReference type="Pfam" id="PF13581">
    <property type="entry name" value="HATPase_c_2"/>
    <property type="match status" value="1"/>
</dbReference>
<dbReference type="SUPFAM" id="SSF55874">
    <property type="entry name" value="ATPase domain of HSP90 chaperone/DNA topoisomerase II/histidine kinase"/>
    <property type="match status" value="1"/>
</dbReference>
<comment type="function">
    <text evidence="1">Negative regulator of sigma-B activity. Phosphorylates and inactivates its specific antagonist protein, RsbV. Upon phosphorylation of RsbV, RsbW is released and binds to sigma-B, thereby blocking its ability to form an RNA polymerase holoenzyme (E-sigma-B).</text>
</comment>
<comment type="catalytic activity">
    <reaction evidence="1">
        <text>L-seryl-[protein] + ATP = O-phospho-L-seryl-[protein] + ADP + H(+)</text>
        <dbReference type="Rhea" id="RHEA:17989"/>
        <dbReference type="Rhea" id="RHEA-COMP:9863"/>
        <dbReference type="Rhea" id="RHEA-COMP:11604"/>
        <dbReference type="ChEBI" id="CHEBI:15378"/>
        <dbReference type="ChEBI" id="CHEBI:29999"/>
        <dbReference type="ChEBI" id="CHEBI:30616"/>
        <dbReference type="ChEBI" id="CHEBI:83421"/>
        <dbReference type="ChEBI" id="CHEBI:456216"/>
        <dbReference type="EC" id="2.7.11.1"/>
    </reaction>
</comment>
<comment type="catalytic activity">
    <reaction evidence="1">
        <text>L-threonyl-[protein] + ATP = O-phospho-L-threonyl-[protein] + ADP + H(+)</text>
        <dbReference type="Rhea" id="RHEA:46608"/>
        <dbReference type="Rhea" id="RHEA-COMP:11060"/>
        <dbReference type="Rhea" id="RHEA-COMP:11605"/>
        <dbReference type="ChEBI" id="CHEBI:15378"/>
        <dbReference type="ChEBI" id="CHEBI:30013"/>
        <dbReference type="ChEBI" id="CHEBI:30616"/>
        <dbReference type="ChEBI" id="CHEBI:61977"/>
        <dbReference type="ChEBI" id="CHEBI:456216"/>
        <dbReference type="EC" id="2.7.11.1"/>
    </reaction>
</comment>
<comment type="similarity">
    <text evidence="1">Belongs to the anti-sigma-factor family.</text>
</comment>
<accession>A6QIR1</accession>
<keyword id="KW-0067">ATP-binding</keyword>
<keyword id="KW-0418">Kinase</keyword>
<keyword id="KW-0547">Nucleotide-binding</keyword>
<keyword id="KW-0723">Serine/threonine-protein kinase</keyword>
<keyword id="KW-0808">Transferase</keyword>
<evidence type="ECO:0000255" key="1">
    <source>
        <dbReference type="HAMAP-Rule" id="MF_00638"/>
    </source>
</evidence>